<organism>
    <name type="scientific">Streptococcus pyogenes serotype M28 (strain MGAS6180)</name>
    <dbReference type="NCBI Taxonomy" id="319701"/>
    <lineage>
        <taxon>Bacteria</taxon>
        <taxon>Bacillati</taxon>
        <taxon>Bacillota</taxon>
        <taxon>Bacilli</taxon>
        <taxon>Lactobacillales</taxon>
        <taxon>Streptococcaceae</taxon>
        <taxon>Streptococcus</taxon>
    </lineage>
</organism>
<gene>
    <name evidence="1" type="primary">xseB</name>
    <name type="ordered locus">M28_Spy1171</name>
</gene>
<feature type="chain" id="PRO_0000303759" description="Exodeoxyribonuclease 7 small subunit">
    <location>
        <begin position="1"/>
        <end position="71"/>
    </location>
</feature>
<protein>
    <recommendedName>
        <fullName evidence="1">Exodeoxyribonuclease 7 small subunit</fullName>
        <ecNumber evidence="1">3.1.11.6</ecNumber>
    </recommendedName>
    <alternativeName>
        <fullName evidence="1">Exodeoxyribonuclease VII small subunit</fullName>
        <shortName evidence="1">Exonuclease VII small subunit</shortName>
    </alternativeName>
</protein>
<reference key="1">
    <citation type="journal article" date="2005" name="J. Infect. Dis.">
        <title>Genome sequence of a serotype M28 strain of group A Streptococcus: potential new insights into puerperal sepsis and bacterial disease specificity.</title>
        <authorList>
            <person name="Green N.M."/>
            <person name="Zhang S."/>
            <person name="Porcella S.F."/>
            <person name="Nagiec M.J."/>
            <person name="Barbian K.D."/>
            <person name="Beres S.B."/>
            <person name="Lefebvre R.B."/>
            <person name="Musser J.M."/>
        </authorList>
    </citation>
    <scope>NUCLEOTIDE SEQUENCE [LARGE SCALE GENOMIC DNA]</scope>
    <source>
        <strain>MGAS6180</strain>
    </source>
</reference>
<accession>Q48SM9</accession>
<evidence type="ECO:0000255" key="1">
    <source>
        <dbReference type="HAMAP-Rule" id="MF_00337"/>
    </source>
</evidence>
<sequence>MSKTKTFEENLQDLETIVNKLENGDVPLEEAISEFQKGMLLSKELQKTLQAAEKTLVKVMQADGTEVDMDD</sequence>
<dbReference type="EC" id="3.1.11.6" evidence="1"/>
<dbReference type="EMBL" id="CP000056">
    <property type="protein sequence ID" value="AAX72281.1"/>
    <property type="molecule type" value="Genomic_DNA"/>
</dbReference>
<dbReference type="RefSeq" id="WP_002983901.1">
    <property type="nucleotide sequence ID" value="NC_007296.2"/>
</dbReference>
<dbReference type="SMR" id="Q48SM9"/>
<dbReference type="KEGG" id="spb:M28_Spy1171"/>
<dbReference type="HOGENOM" id="CLU_145918_3_2_9"/>
<dbReference type="GO" id="GO:0005829">
    <property type="term" value="C:cytosol"/>
    <property type="evidence" value="ECO:0007669"/>
    <property type="project" value="TreeGrafter"/>
</dbReference>
<dbReference type="GO" id="GO:0009318">
    <property type="term" value="C:exodeoxyribonuclease VII complex"/>
    <property type="evidence" value="ECO:0007669"/>
    <property type="project" value="InterPro"/>
</dbReference>
<dbReference type="GO" id="GO:0008855">
    <property type="term" value="F:exodeoxyribonuclease VII activity"/>
    <property type="evidence" value="ECO:0007669"/>
    <property type="project" value="UniProtKB-UniRule"/>
</dbReference>
<dbReference type="GO" id="GO:0006308">
    <property type="term" value="P:DNA catabolic process"/>
    <property type="evidence" value="ECO:0007669"/>
    <property type="project" value="UniProtKB-UniRule"/>
</dbReference>
<dbReference type="Gene3D" id="1.10.287.1040">
    <property type="entry name" value="Exonuclease VII, small subunit"/>
    <property type="match status" value="1"/>
</dbReference>
<dbReference type="HAMAP" id="MF_00337">
    <property type="entry name" value="Exonuc_7_S"/>
    <property type="match status" value="1"/>
</dbReference>
<dbReference type="InterPro" id="IPR003761">
    <property type="entry name" value="Exonuc_VII_S"/>
</dbReference>
<dbReference type="InterPro" id="IPR037004">
    <property type="entry name" value="Exonuc_VII_ssu_sf"/>
</dbReference>
<dbReference type="NCBIfam" id="NF002138">
    <property type="entry name" value="PRK00977.1-2"/>
    <property type="match status" value="1"/>
</dbReference>
<dbReference type="NCBIfam" id="TIGR01280">
    <property type="entry name" value="xseB"/>
    <property type="match status" value="1"/>
</dbReference>
<dbReference type="PANTHER" id="PTHR34137">
    <property type="entry name" value="EXODEOXYRIBONUCLEASE 7 SMALL SUBUNIT"/>
    <property type="match status" value="1"/>
</dbReference>
<dbReference type="PANTHER" id="PTHR34137:SF1">
    <property type="entry name" value="EXODEOXYRIBONUCLEASE 7 SMALL SUBUNIT"/>
    <property type="match status" value="1"/>
</dbReference>
<dbReference type="Pfam" id="PF02609">
    <property type="entry name" value="Exonuc_VII_S"/>
    <property type="match status" value="1"/>
</dbReference>
<dbReference type="PIRSF" id="PIRSF006488">
    <property type="entry name" value="Exonuc_VII_S"/>
    <property type="match status" value="1"/>
</dbReference>
<dbReference type="SUPFAM" id="SSF116842">
    <property type="entry name" value="XseB-like"/>
    <property type="match status" value="1"/>
</dbReference>
<proteinExistence type="inferred from homology"/>
<keyword id="KW-0963">Cytoplasm</keyword>
<keyword id="KW-0269">Exonuclease</keyword>
<keyword id="KW-0378">Hydrolase</keyword>
<keyword id="KW-0540">Nuclease</keyword>
<comment type="function">
    <text evidence="1">Bidirectionally degrades single-stranded DNA into large acid-insoluble oligonucleotides, which are then degraded further into small acid-soluble oligonucleotides.</text>
</comment>
<comment type="catalytic activity">
    <reaction evidence="1">
        <text>Exonucleolytic cleavage in either 5'- to 3'- or 3'- to 5'-direction to yield nucleoside 5'-phosphates.</text>
        <dbReference type="EC" id="3.1.11.6"/>
    </reaction>
</comment>
<comment type="subunit">
    <text evidence="1">Heterooligomer composed of large and small subunits.</text>
</comment>
<comment type="subcellular location">
    <subcellularLocation>
        <location evidence="1">Cytoplasm</location>
    </subcellularLocation>
</comment>
<comment type="similarity">
    <text evidence="1">Belongs to the XseB family.</text>
</comment>
<name>EX7S_STRPM</name>